<dbReference type="EC" id="3.4.23.36" evidence="1"/>
<dbReference type="EMBL" id="CP000922">
    <property type="protein sequence ID" value="ACJ34171.1"/>
    <property type="molecule type" value="Genomic_DNA"/>
</dbReference>
<dbReference type="SMR" id="B7GFB0"/>
<dbReference type="STRING" id="491915.Aflv_1810"/>
<dbReference type="KEGG" id="afl:Aflv_1810"/>
<dbReference type="eggNOG" id="COG0597">
    <property type="taxonomic scope" value="Bacteria"/>
</dbReference>
<dbReference type="HOGENOM" id="CLU_083252_3_0_9"/>
<dbReference type="UniPathway" id="UPA00665"/>
<dbReference type="Proteomes" id="UP000000742">
    <property type="component" value="Chromosome"/>
</dbReference>
<dbReference type="GO" id="GO:0005886">
    <property type="term" value="C:plasma membrane"/>
    <property type="evidence" value="ECO:0007669"/>
    <property type="project" value="UniProtKB-SubCell"/>
</dbReference>
<dbReference type="GO" id="GO:0004190">
    <property type="term" value="F:aspartic-type endopeptidase activity"/>
    <property type="evidence" value="ECO:0007669"/>
    <property type="project" value="UniProtKB-UniRule"/>
</dbReference>
<dbReference type="GO" id="GO:0006508">
    <property type="term" value="P:proteolysis"/>
    <property type="evidence" value="ECO:0007669"/>
    <property type="project" value="UniProtKB-KW"/>
</dbReference>
<dbReference type="HAMAP" id="MF_00161">
    <property type="entry name" value="LspA"/>
    <property type="match status" value="1"/>
</dbReference>
<dbReference type="InterPro" id="IPR001872">
    <property type="entry name" value="Peptidase_A8"/>
</dbReference>
<dbReference type="NCBIfam" id="TIGR00077">
    <property type="entry name" value="lspA"/>
    <property type="match status" value="1"/>
</dbReference>
<dbReference type="PANTHER" id="PTHR33695">
    <property type="entry name" value="LIPOPROTEIN SIGNAL PEPTIDASE"/>
    <property type="match status" value="1"/>
</dbReference>
<dbReference type="PANTHER" id="PTHR33695:SF1">
    <property type="entry name" value="LIPOPROTEIN SIGNAL PEPTIDASE"/>
    <property type="match status" value="1"/>
</dbReference>
<dbReference type="Pfam" id="PF01252">
    <property type="entry name" value="Peptidase_A8"/>
    <property type="match status" value="1"/>
</dbReference>
<dbReference type="PRINTS" id="PR00781">
    <property type="entry name" value="LIPOSIGPTASE"/>
</dbReference>
<dbReference type="PROSITE" id="PS00855">
    <property type="entry name" value="SPASE_II"/>
    <property type="match status" value="1"/>
</dbReference>
<comment type="function">
    <text evidence="1">This protein specifically catalyzes the removal of signal peptides from prolipoproteins.</text>
</comment>
<comment type="catalytic activity">
    <reaction evidence="1">
        <text>Release of signal peptides from bacterial membrane prolipoproteins. Hydrolyzes -Xaa-Yaa-Zaa-|-(S,diacylglyceryl)Cys-, in which Xaa is hydrophobic (preferably Leu), and Yaa (Ala or Ser) and Zaa (Gly or Ala) have small, neutral side chains.</text>
        <dbReference type="EC" id="3.4.23.36"/>
    </reaction>
</comment>
<comment type="pathway">
    <text evidence="1">Protein modification; lipoprotein biosynthesis (signal peptide cleavage).</text>
</comment>
<comment type="subcellular location">
    <subcellularLocation>
        <location evidence="1">Cell membrane</location>
        <topology evidence="1">Multi-pass membrane protein</topology>
    </subcellularLocation>
</comment>
<comment type="similarity">
    <text evidence="1">Belongs to the peptidase A8 family.</text>
</comment>
<organism>
    <name type="scientific">Anoxybacillus flavithermus (strain DSM 21510 / WK1)</name>
    <dbReference type="NCBI Taxonomy" id="491915"/>
    <lineage>
        <taxon>Bacteria</taxon>
        <taxon>Bacillati</taxon>
        <taxon>Bacillota</taxon>
        <taxon>Bacilli</taxon>
        <taxon>Bacillales</taxon>
        <taxon>Anoxybacillaceae</taxon>
        <taxon>Anoxybacillus</taxon>
    </lineage>
</organism>
<keyword id="KW-0064">Aspartyl protease</keyword>
<keyword id="KW-1003">Cell membrane</keyword>
<keyword id="KW-0378">Hydrolase</keyword>
<keyword id="KW-0472">Membrane</keyword>
<keyword id="KW-0645">Protease</keyword>
<keyword id="KW-0812">Transmembrane</keyword>
<keyword id="KW-1133">Transmembrane helix</keyword>
<feature type="chain" id="PRO_1000190786" description="Lipoprotein signal peptidase">
    <location>
        <begin position="1"/>
        <end position="168"/>
    </location>
</feature>
<feature type="transmembrane region" description="Helical" evidence="1">
    <location>
        <begin position="8"/>
        <end position="28"/>
    </location>
</feature>
<feature type="transmembrane region" description="Helical" evidence="1">
    <location>
        <begin position="61"/>
        <end position="81"/>
    </location>
</feature>
<feature type="transmembrane region" description="Helical" evidence="1">
    <location>
        <begin position="91"/>
        <end position="111"/>
    </location>
</feature>
<feature type="transmembrane region" description="Helical" evidence="1">
    <location>
        <begin position="128"/>
        <end position="148"/>
    </location>
</feature>
<feature type="active site" evidence="1">
    <location>
        <position position="117"/>
    </location>
</feature>
<feature type="active site" evidence="1">
    <location>
        <position position="135"/>
    </location>
</feature>
<gene>
    <name evidence="1" type="primary">lspA</name>
    <name type="ordered locus">Aflv_1810</name>
</gene>
<reference key="1">
    <citation type="journal article" date="2008" name="Genome Biol.">
        <title>Encapsulated in silica: genome, proteome and physiology of the thermophilic bacterium Anoxybacillus flavithermus WK1.</title>
        <authorList>
            <person name="Saw J.H."/>
            <person name="Mountain B.W."/>
            <person name="Feng L."/>
            <person name="Omelchenko M.V."/>
            <person name="Hou S."/>
            <person name="Saito J.A."/>
            <person name="Stott M.B."/>
            <person name="Li D."/>
            <person name="Zhao G."/>
            <person name="Wu J."/>
            <person name="Galperin M.Y."/>
            <person name="Koonin E.V."/>
            <person name="Makarova K.S."/>
            <person name="Wolf Y.I."/>
            <person name="Rigden D.J."/>
            <person name="Dunfield P.F."/>
            <person name="Wang L."/>
            <person name="Alam M."/>
        </authorList>
    </citation>
    <scope>NUCLEOTIDE SEQUENCE [LARGE SCALE GENOMIC DNA]</scope>
    <source>
        <strain>DSM 21510 / WK1</strain>
    </source>
</reference>
<name>LSPA_ANOFW</name>
<accession>B7GFB0</accession>
<protein>
    <recommendedName>
        <fullName evidence="1">Lipoprotein signal peptidase</fullName>
        <ecNumber evidence="1">3.4.23.36</ecNumber>
    </recommendedName>
    <alternativeName>
        <fullName evidence="1">Prolipoprotein signal peptidase</fullName>
    </alternativeName>
    <alternativeName>
        <fullName evidence="1">Signal peptidase II</fullName>
        <shortName evidence="1">SPase II</shortName>
    </alternativeName>
</protein>
<proteinExistence type="inferred from homology"/>
<sequence length="168" mass="19455">MLWRGVMLYYLLAFVVILIDQWTKWLVVRYMELGESIPIIENVLYMTSHRNRGAAWGMLQGQFWLFYLITIVVVVGIVIYIQRLQPTQRLFGIALGLMLGGALGNFIDRIFRKEVVDFVHTYIFNYSFPIFNVADAALTIGVALMFIYTWTEEKQRKGMSDGANSTHD</sequence>
<evidence type="ECO:0000255" key="1">
    <source>
        <dbReference type="HAMAP-Rule" id="MF_00161"/>
    </source>
</evidence>